<comment type="function">
    <text evidence="1">Binds to 23S rRNA. Forms part of two intersubunit bridges in the 70S ribosome.</text>
</comment>
<comment type="subunit">
    <text evidence="1">Part of the 50S ribosomal subunit. Forms a cluster with proteins L3 and L19. In the 70S ribosome, L14 and L19 interact and together make contacts with the 16S rRNA in bridges B5 and B8.</text>
</comment>
<comment type="similarity">
    <text evidence="1">Belongs to the universal ribosomal protein uL14 family.</text>
</comment>
<keyword id="KW-1185">Reference proteome</keyword>
<keyword id="KW-0687">Ribonucleoprotein</keyword>
<keyword id="KW-0689">Ribosomal protein</keyword>
<keyword id="KW-0694">RNA-binding</keyword>
<keyword id="KW-0699">rRNA-binding</keyword>
<dbReference type="EMBL" id="CP000023">
    <property type="protein sequence ID" value="AAV61522.1"/>
    <property type="molecule type" value="Genomic_DNA"/>
</dbReference>
<dbReference type="RefSeq" id="WP_002952155.1">
    <property type="nucleotide sequence ID" value="NC_006448.1"/>
</dbReference>
<dbReference type="SMR" id="Q5M2C3"/>
<dbReference type="STRING" id="264199.stu1924"/>
<dbReference type="GeneID" id="66899652"/>
<dbReference type="KEGG" id="stl:stu1924"/>
<dbReference type="eggNOG" id="COG0093">
    <property type="taxonomic scope" value="Bacteria"/>
</dbReference>
<dbReference type="HOGENOM" id="CLU_095071_2_1_9"/>
<dbReference type="Proteomes" id="UP000001170">
    <property type="component" value="Chromosome"/>
</dbReference>
<dbReference type="GO" id="GO:0022625">
    <property type="term" value="C:cytosolic large ribosomal subunit"/>
    <property type="evidence" value="ECO:0007669"/>
    <property type="project" value="TreeGrafter"/>
</dbReference>
<dbReference type="GO" id="GO:0070180">
    <property type="term" value="F:large ribosomal subunit rRNA binding"/>
    <property type="evidence" value="ECO:0007669"/>
    <property type="project" value="TreeGrafter"/>
</dbReference>
<dbReference type="GO" id="GO:0003735">
    <property type="term" value="F:structural constituent of ribosome"/>
    <property type="evidence" value="ECO:0007669"/>
    <property type="project" value="InterPro"/>
</dbReference>
<dbReference type="GO" id="GO:0006412">
    <property type="term" value="P:translation"/>
    <property type="evidence" value="ECO:0007669"/>
    <property type="project" value="UniProtKB-UniRule"/>
</dbReference>
<dbReference type="CDD" id="cd00337">
    <property type="entry name" value="Ribosomal_uL14"/>
    <property type="match status" value="1"/>
</dbReference>
<dbReference type="FunFam" id="2.40.150.20:FF:000001">
    <property type="entry name" value="50S ribosomal protein L14"/>
    <property type="match status" value="1"/>
</dbReference>
<dbReference type="Gene3D" id="2.40.150.20">
    <property type="entry name" value="Ribosomal protein L14"/>
    <property type="match status" value="1"/>
</dbReference>
<dbReference type="HAMAP" id="MF_01367">
    <property type="entry name" value="Ribosomal_uL14"/>
    <property type="match status" value="1"/>
</dbReference>
<dbReference type="InterPro" id="IPR000218">
    <property type="entry name" value="Ribosomal_uL14"/>
</dbReference>
<dbReference type="InterPro" id="IPR005745">
    <property type="entry name" value="Ribosomal_uL14_bac-type"/>
</dbReference>
<dbReference type="InterPro" id="IPR019972">
    <property type="entry name" value="Ribosomal_uL14_CS"/>
</dbReference>
<dbReference type="InterPro" id="IPR036853">
    <property type="entry name" value="Ribosomal_uL14_sf"/>
</dbReference>
<dbReference type="NCBIfam" id="TIGR01067">
    <property type="entry name" value="rplN_bact"/>
    <property type="match status" value="1"/>
</dbReference>
<dbReference type="PANTHER" id="PTHR11761">
    <property type="entry name" value="50S/60S RIBOSOMAL PROTEIN L14/L23"/>
    <property type="match status" value="1"/>
</dbReference>
<dbReference type="PANTHER" id="PTHR11761:SF3">
    <property type="entry name" value="LARGE RIBOSOMAL SUBUNIT PROTEIN UL14M"/>
    <property type="match status" value="1"/>
</dbReference>
<dbReference type="Pfam" id="PF00238">
    <property type="entry name" value="Ribosomal_L14"/>
    <property type="match status" value="1"/>
</dbReference>
<dbReference type="SMART" id="SM01374">
    <property type="entry name" value="Ribosomal_L14"/>
    <property type="match status" value="1"/>
</dbReference>
<dbReference type="SUPFAM" id="SSF50193">
    <property type="entry name" value="Ribosomal protein L14"/>
    <property type="match status" value="1"/>
</dbReference>
<dbReference type="PROSITE" id="PS00049">
    <property type="entry name" value="RIBOSOMAL_L14"/>
    <property type="match status" value="1"/>
</dbReference>
<reference key="1">
    <citation type="journal article" date="2004" name="Nat. Biotechnol.">
        <title>Complete sequence and comparative genome analysis of the dairy bacterium Streptococcus thermophilus.</title>
        <authorList>
            <person name="Bolotin A."/>
            <person name="Quinquis B."/>
            <person name="Renault P."/>
            <person name="Sorokin A."/>
            <person name="Ehrlich S.D."/>
            <person name="Kulakauskas S."/>
            <person name="Lapidus A."/>
            <person name="Goltsman E."/>
            <person name="Mazur M."/>
            <person name="Pusch G.D."/>
            <person name="Fonstein M."/>
            <person name="Overbeek R."/>
            <person name="Kyprides N."/>
            <person name="Purnelle B."/>
            <person name="Prozzi D."/>
            <person name="Ngui K."/>
            <person name="Masuy D."/>
            <person name="Hancy F."/>
            <person name="Burteau S."/>
            <person name="Boutry M."/>
            <person name="Delcour J."/>
            <person name="Goffeau A."/>
            <person name="Hols P."/>
        </authorList>
    </citation>
    <scope>NUCLEOTIDE SEQUENCE [LARGE SCALE GENOMIC DNA]</scope>
    <source>
        <strain>ATCC BAA-250 / LMG 18311</strain>
    </source>
</reference>
<sequence>MIQQESRLKVADNSGAREILTIKVLGGSGRKFANIGDVIVATVKQATPGGAVKKGDVVKAVIVRTKTGARRSDGSYIKFDDNAAVIIRDDKTPRGTRIFGPVARELREGGYMRIVSLAPEVL</sequence>
<evidence type="ECO:0000255" key="1">
    <source>
        <dbReference type="HAMAP-Rule" id="MF_01367"/>
    </source>
</evidence>
<evidence type="ECO:0000305" key="2"/>
<name>RL14_STRT2</name>
<proteinExistence type="inferred from homology"/>
<accession>Q5M2C3</accession>
<gene>
    <name evidence="1" type="primary">rplN</name>
    <name type="ordered locus">stu1924</name>
</gene>
<organism>
    <name type="scientific">Streptococcus thermophilus (strain ATCC BAA-250 / LMG 18311)</name>
    <dbReference type="NCBI Taxonomy" id="264199"/>
    <lineage>
        <taxon>Bacteria</taxon>
        <taxon>Bacillati</taxon>
        <taxon>Bacillota</taxon>
        <taxon>Bacilli</taxon>
        <taxon>Lactobacillales</taxon>
        <taxon>Streptococcaceae</taxon>
        <taxon>Streptococcus</taxon>
    </lineage>
</organism>
<protein>
    <recommendedName>
        <fullName evidence="1">Large ribosomal subunit protein uL14</fullName>
    </recommendedName>
    <alternativeName>
        <fullName evidence="2">50S ribosomal protein L14</fullName>
    </alternativeName>
</protein>
<feature type="chain" id="PRO_1000055729" description="Large ribosomal subunit protein uL14">
    <location>
        <begin position="1"/>
        <end position="122"/>
    </location>
</feature>